<organism>
    <name type="scientific">Cupriavidus pinatubonensis (strain JMP 134 / LMG 1197)</name>
    <name type="common">Cupriavidus necator (strain JMP 134)</name>
    <dbReference type="NCBI Taxonomy" id="264198"/>
    <lineage>
        <taxon>Bacteria</taxon>
        <taxon>Pseudomonadati</taxon>
        <taxon>Pseudomonadota</taxon>
        <taxon>Betaproteobacteria</taxon>
        <taxon>Burkholderiales</taxon>
        <taxon>Burkholderiaceae</taxon>
        <taxon>Cupriavidus</taxon>
    </lineage>
</organism>
<proteinExistence type="inferred from homology"/>
<protein>
    <recommendedName>
        <fullName evidence="1">Glucokinase</fullName>
        <ecNumber evidence="1">2.7.1.2</ecNumber>
    </recommendedName>
    <alternativeName>
        <fullName evidence="1">Glucose kinase</fullName>
    </alternativeName>
</protein>
<gene>
    <name evidence="1" type="primary">glk</name>
    <name type="ordered locus">Reut_B5327</name>
</gene>
<evidence type="ECO:0000255" key="1">
    <source>
        <dbReference type="HAMAP-Rule" id="MF_00524"/>
    </source>
</evidence>
<feature type="chain" id="PRO_0000268780" description="Glucokinase">
    <location>
        <begin position="1"/>
        <end position="343"/>
    </location>
</feature>
<feature type="binding site" evidence="1">
    <location>
        <begin position="21"/>
        <end position="26"/>
    </location>
    <ligand>
        <name>ATP</name>
        <dbReference type="ChEBI" id="CHEBI:30616"/>
    </ligand>
</feature>
<dbReference type="EC" id="2.7.1.2" evidence="1"/>
<dbReference type="EMBL" id="CP000091">
    <property type="protein sequence ID" value="AAZ64672.1"/>
    <property type="molecule type" value="Genomic_DNA"/>
</dbReference>
<dbReference type="SMR" id="Q46QB2"/>
<dbReference type="STRING" id="264198.Reut_B5327"/>
<dbReference type="KEGG" id="reu:Reut_B5327"/>
<dbReference type="eggNOG" id="COG0837">
    <property type="taxonomic scope" value="Bacteria"/>
</dbReference>
<dbReference type="HOGENOM" id="CLU_042582_1_0_4"/>
<dbReference type="OrthoDB" id="257751at2"/>
<dbReference type="GO" id="GO:0005829">
    <property type="term" value="C:cytosol"/>
    <property type="evidence" value="ECO:0007669"/>
    <property type="project" value="TreeGrafter"/>
</dbReference>
<dbReference type="GO" id="GO:0005524">
    <property type="term" value="F:ATP binding"/>
    <property type="evidence" value="ECO:0007669"/>
    <property type="project" value="UniProtKB-UniRule"/>
</dbReference>
<dbReference type="GO" id="GO:0005536">
    <property type="term" value="F:D-glucose binding"/>
    <property type="evidence" value="ECO:0007669"/>
    <property type="project" value="InterPro"/>
</dbReference>
<dbReference type="GO" id="GO:0004340">
    <property type="term" value="F:glucokinase activity"/>
    <property type="evidence" value="ECO:0007669"/>
    <property type="project" value="UniProtKB-UniRule"/>
</dbReference>
<dbReference type="GO" id="GO:0006096">
    <property type="term" value="P:glycolytic process"/>
    <property type="evidence" value="ECO:0007669"/>
    <property type="project" value="UniProtKB-UniRule"/>
</dbReference>
<dbReference type="CDD" id="cd24008">
    <property type="entry name" value="ASKHA_NBD_GLK"/>
    <property type="match status" value="1"/>
</dbReference>
<dbReference type="Gene3D" id="3.30.420.40">
    <property type="match status" value="1"/>
</dbReference>
<dbReference type="Gene3D" id="3.40.367.20">
    <property type="match status" value="1"/>
</dbReference>
<dbReference type="HAMAP" id="MF_00524">
    <property type="entry name" value="Glucokinase"/>
    <property type="match status" value="1"/>
</dbReference>
<dbReference type="InterPro" id="IPR043129">
    <property type="entry name" value="ATPase_NBD"/>
</dbReference>
<dbReference type="InterPro" id="IPR050201">
    <property type="entry name" value="Bacterial_glucokinase"/>
</dbReference>
<dbReference type="InterPro" id="IPR003836">
    <property type="entry name" value="Glucokinase"/>
</dbReference>
<dbReference type="NCBIfam" id="TIGR00749">
    <property type="entry name" value="glk"/>
    <property type="match status" value="1"/>
</dbReference>
<dbReference type="NCBIfam" id="NF001416">
    <property type="entry name" value="PRK00292.1-3"/>
    <property type="match status" value="1"/>
</dbReference>
<dbReference type="PANTHER" id="PTHR47690">
    <property type="entry name" value="GLUCOKINASE"/>
    <property type="match status" value="1"/>
</dbReference>
<dbReference type="PANTHER" id="PTHR47690:SF1">
    <property type="entry name" value="GLUCOKINASE"/>
    <property type="match status" value="1"/>
</dbReference>
<dbReference type="Pfam" id="PF02685">
    <property type="entry name" value="Glucokinase"/>
    <property type="match status" value="1"/>
</dbReference>
<dbReference type="SUPFAM" id="SSF53067">
    <property type="entry name" value="Actin-like ATPase domain"/>
    <property type="match status" value="1"/>
</dbReference>
<sequence length="343" mass="35393">MSNAMAASAVPDDTAYPRLLADVGGTNVRFALETAPMQIGAVTALKVADHPSLEAAMRHYRDALSASGAKLPRHAAIGLANPVTGDHVRLTNHDWAFSIEATRQALGLQTLVAINDFTSLALGLPYLGANDLVQIRSGQAVATAPRALIGPGTGLGVSGLVPAPGGGAVALAGEGGHIELMPVTDDEWIAWRATHASLGRVSAERLLSGMGLSQIHAALSAETGTRVDVPLTPEQVTTGAFARHDPLCERTMAVFFGLLGSVAADIALVMGALGGVYLGGGILPRFVPALQASAFNARFVAKGRMRGYLDKLPVYVITASYPALPGLARALADTLSHGRPHIG</sequence>
<reference key="1">
    <citation type="journal article" date="2010" name="PLoS ONE">
        <title>The complete multipartite genome sequence of Cupriavidus necator JMP134, a versatile pollutant degrader.</title>
        <authorList>
            <person name="Lykidis A."/>
            <person name="Perez-Pantoja D."/>
            <person name="Ledger T."/>
            <person name="Mavromatis K."/>
            <person name="Anderson I.J."/>
            <person name="Ivanova N.N."/>
            <person name="Hooper S.D."/>
            <person name="Lapidus A."/>
            <person name="Lucas S."/>
            <person name="Gonzalez B."/>
            <person name="Kyrpides N.C."/>
        </authorList>
    </citation>
    <scope>NUCLEOTIDE SEQUENCE [LARGE SCALE GENOMIC DNA]</scope>
    <source>
        <strain>JMP134 / LMG 1197</strain>
    </source>
</reference>
<comment type="catalytic activity">
    <reaction evidence="1">
        <text>D-glucose + ATP = D-glucose 6-phosphate + ADP + H(+)</text>
        <dbReference type="Rhea" id="RHEA:17825"/>
        <dbReference type="ChEBI" id="CHEBI:4167"/>
        <dbReference type="ChEBI" id="CHEBI:15378"/>
        <dbReference type="ChEBI" id="CHEBI:30616"/>
        <dbReference type="ChEBI" id="CHEBI:61548"/>
        <dbReference type="ChEBI" id="CHEBI:456216"/>
        <dbReference type="EC" id="2.7.1.2"/>
    </reaction>
</comment>
<comment type="subcellular location">
    <subcellularLocation>
        <location evidence="1">Cytoplasm</location>
    </subcellularLocation>
</comment>
<comment type="similarity">
    <text evidence="1">Belongs to the bacterial glucokinase family.</text>
</comment>
<keyword id="KW-0067">ATP-binding</keyword>
<keyword id="KW-0963">Cytoplasm</keyword>
<keyword id="KW-0324">Glycolysis</keyword>
<keyword id="KW-0418">Kinase</keyword>
<keyword id="KW-0547">Nucleotide-binding</keyword>
<keyword id="KW-0808">Transferase</keyword>
<accession>Q46QB2</accession>
<name>GLK_CUPPJ</name>